<name>F4ST_FLACH</name>
<organism>
    <name type="scientific">Flaveria chlorifolia</name>
    <name type="common">Clasping yellowtops</name>
    <dbReference type="NCBI Taxonomy" id="4228"/>
    <lineage>
        <taxon>Eukaryota</taxon>
        <taxon>Viridiplantae</taxon>
        <taxon>Streptophyta</taxon>
        <taxon>Embryophyta</taxon>
        <taxon>Tracheophyta</taxon>
        <taxon>Spermatophyta</taxon>
        <taxon>Magnoliopsida</taxon>
        <taxon>eudicotyledons</taxon>
        <taxon>Gunneridae</taxon>
        <taxon>Pentapetalae</taxon>
        <taxon>asterids</taxon>
        <taxon>campanulids</taxon>
        <taxon>Asterales</taxon>
        <taxon>Asteraceae</taxon>
        <taxon>Asteroideae</taxon>
        <taxon>Heliantheae alliance</taxon>
        <taxon>Tageteae</taxon>
        <taxon>Flaveria</taxon>
    </lineage>
</organism>
<protein>
    <recommendedName>
        <fullName>Flavonol 4'-sulfotransferase</fullName>
        <shortName>F4-ST</shortName>
        <ecNumber>2.8.2.27</ecNumber>
    </recommendedName>
</protein>
<proteinExistence type="evidence at protein level"/>
<accession>P52837</accession>
<evidence type="ECO:0000250" key="1"/>
<evidence type="ECO:0000269" key="2">
    <source>
    </source>
</evidence>
<evidence type="ECO:0000305" key="3"/>
<feature type="chain" id="PRO_0000085179" description="Flavonol 4'-sulfotransferase">
    <location>
        <begin position="1"/>
        <end position="320"/>
    </location>
</feature>
<feature type="active site" description="Proton acceptor" evidence="1">
    <location>
        <position position="129"/>
    </location>
</feature>
<feature type="binding site" evidence="1">
    <location>
        <begin position="69"/>
        <end position="74"/>
    </location>
    <ligand>
        <name>3'-phosphoadenylyl sulfate</name>
        <dbReference type="ChEBI" id="CHEBI:58339"/>
    </ligand>
</feature>
<feature type="binding site" evidence="1">
    <location>
        <position position="151"/>
    </location>
    <ligand>
        <name>3'-phosphoadenylyl sulfate</name>
        <dbReference type="ChEBI" id="CHEBI:58339"/>
    </ligand>
</feature>
<feature type="binding site" evidence="1">
    <location>
        <position position="159"/>
    </location>
    <ligand>
        <name>3'-phosphoadenylyl sulfate</name>
        <dbReference type="ChEBI" id="CHEBI:58339"/>
    </ligand>
</feature>
<feature type="binding site" evidence="1">
    <location>
        <position position="217"/>
    </location>
    <ligand>
        <name>3'-phosphoadenylyl sulfate</name>
        <dbReference type="ChEBI" id="CHEBI:58339"/>
    </ligand>
</feature>
<feature type="binding site" evidence="1">
    <location>
        <begin position="285"/>
        <end position="287"/>
    </location>
    <ligand>
        <name>3'-phosphoadenylyl sulfate</name>
        <dbReference type="ChEBI" id="CHEBI:58339"/>
    </ligand>
</feature>
<reference key="1">
    <citation type="journal article" date="1992" name="Proc. Natl. Acad. Sci. U.S.A.">
        <title>Molecular characterization of two plant flavonol sulfotransferases.</title>
        <authorList>
            <person name="Varin L."/>
            <person name="Deluca V."/>
            <person name="Ibrahim R.K."/>
            <person name="Brisson N."/>
        </authorList>
    </citation>
    <scope>NUCLEOTIDE SEQUENCE [MRNA]</scope>
</reference>
<reference key="2">
    <citation type="journal article" date="1989" name="Plant Physiol.">
        <title>Partial purification and characterization of three flavonol-specific sulfotransferases from Flaveria chloraefolia.</title>
        <authorList>
            <person name="Varin L."/>
            <person name="Ibrahim R.K."/>
        </authorList>
    </citation>
    <scope>FUNCTION</scope>
    <scope>CATALYTIC ACTIVITY</scope>
    <scope>BIOPHYSICOCHEMICAL PROPERTIES</scope>
    <scope>ACTIVITY REGULATION</scope>
</reference>
<reference key="3">
    <citation type="journal article" date="1995" name="J. Biol. Chem.">
        <title>Chimeric flavonol sulfotransferases define a domain responsible for substrate and position specificities.</title>
        <authorList>
            <person name="Varin L."/>
            <person name="Marsolais F."/>
            <person name="Brisson N."/>
        </authorList>
    </citation>
    <scope>PAPS-BINDING SITE</scope>
</reference>
<comment type="function">
    <text evidence="2">Sulfotransferase that utilizes 3'-phospho-5'-adenylyl sulfate (PAPS) as sulfonate donor to catalyze the sulfate conjugation of quercetin 3-sulfate &gt; kaempferol 3-sulfate &gt; isorhamnetin 3-sulfate &gt; patuletin 3-sulfate, but not tamarixetin 3-sulfate. O-sulfation of position 4' of flavonol. May play a role in auxin transport.</text>
</comment>
<comment type="catalytic activity">
    <reaction evidence="2">
        <text>quercetin 3-sulfate + 3'-phosphoadenylyl sulfate = quercetin 3,4'-bissulfate + adenosine 3',5'-bisphosphate + H(+)</text>
        <dbReference type="Rhea" id="RHEA:17205"/>
        <dbReference type="ChEBI" id="CHEBI:15378"/>
        <dbReference type="ChEBI" id="CHEBI:58254"/>
        <dbReference type="ChEBI" id="CHEBI:58339"/>
        <dbReference type="ChEBI" id="CHEBI:58343"/>
        <dbReference type="ChEBI" id="CHEBI:58353"/>
        <dbReference type="EC" id="2.8.2.27"/>
    </reaction>
</comment>
<comment type="activity regulation">
    <text evidence="2">No requirement for divalent cations and insensitive to p-chloromercuribenzoate, iodoacetate, or iodoacetamide.</text>
</comment>
<comment type="biophysicochemical properties">
    <kinetics>
        <KM evidence="2">0.36 uM for quercetin 3-sulfate</KM>
        <KM evidence="2">0.38 uM for 3'-phosphoadenosine 5'-phosphosulfate</KM>
    </kinetics>
    <phDependence>
        <text evidence="2">Optimum pH is 7.5.</text>
    </phDependence>
</comment>
<comment type="subcellular location">
    <subcellularLocation>
        <location>Cytoplasm</location>
    </subcellularLocation>
</comment>
<comment type="tissue specificity">
    <text>Highest in shoot tips and lowest in mature leaves and roots.</text>
</comment>
<comment type="similarity">
    <text evidence="3">Belongs to the sulfotransferase 1 family.</text>
</comment>
<sequence>METTKTQFESMAEMIKKLPQHTCSSLKGRITLYKYQDFWGLQNNIEGAILAQQSFKARPDDVFLCSYPKSGTTWLKALAYAIVTREKFDEFTSPLLTNIPHNCIPYIEKDLKKIVENQNNSCFTPMATHMPYHVLPKSILALNCKMVYIYRNIKDVIVSFYHFGREITKLPLEDAPFEEAFDEFYHGISQFGPYWDHLLGYWKASLERPEVILFLKYEDVKKDPTSNVKRLAEFIGYPFTFEEEKEGVIESIIKLCSFENLSNLEVNKSGNSKGFLPIENRLYFRKAKDGDWKNYFTDEMTEKIDKLIDEKLSATGLVLK</sequence>
<keyword id="KW-0963">Cytoplasm</keyword>
<keyword id="KW-0808">Transferase</keyword>
<dbReference type="EC" id="2.8.2.27"/>
<dbReference type="EMBL" id="M84136">
    <property type="protein sequence ID" value="AAA33343.1"/>
    <property type="molecule type" value="mRNA"/>
</dbReference>
<dbReference type="PIR" id="A40216">
    <property type="entry name" value="A40216"/>
</dbReference>
<dbReference type="SMR" id="P52837"/>
<dbReference type="KEGG" id="ag:AAA33343"/>
<dbReference type="GO" id="GO:0005737">
    <property type="term" value="C:cytoplasm"/>
    <property type="evidence" value="ECO:0007669"/>
    <property type="project" value="UniProtKB-SubCell"/>
</dbReference>
<dbReference type="GO" id="GO:0047366">
    <property type="term" value="F:quercetin-3-sulfate 4'-sulfotransferase activity"/>
    <property type="evidence" value="ECO:0007669"/>
    <property type="project" value="UniProtKB-EC"/>
</dbReference>
<dbReference type="Gene3D" id="3.40.50.300">
    <property type="entry name" value="P-loop containing nucleotide triphosphate hydrolases"/>
    <property type="match status" value="1"/>
</dbReference>
<dbReference type="InterPro" id="IPR027417">
    <property type="entry name" value="P-loop_NTPase"/>
</dbReference>
<dbReference type="InterPro" id="IPR000863">
    <property type="entry name" value="Sulfotransferase_dom"/>
</dbReference>
<dbReference type="PANTHER" id="PTHR11783">
    <property type="entry name" value="SULFOTRANSFERASE SULT"/>
    <property type="match status" value="1"/>
</dbReference>
<dbReference type="Pfam" id="PF00685">
    <property type="entry name" value="Sulfotransfer_1"/>
    <property type="match status" value="1"/>
</dbReference>
<dbReference type="SUPFAM" id="SSF52540">
    <property type="entry name" value="P-loop containing nucleoside triphosphate hydrolases"/>
    <property type="match status" value="1"/>
</dbReference>